<name>GLRX2_CAMPS</name>
<proteinExistence type="inferred from homology"/>
<evidence type="ECO:0000250" key="1">
    <source>
        <dbReference type="UniProtKB" id="P68460"/>
    </source>
</evidence>
<evidence type="ECO:0000305" key="2"/>
<sequence length="124" mass="14014">MKNVLIIFGKPYCSICENVSEAVEELKSEYDILHVDILSFFLKDGDSSMLGDVKRGTLIGNFAAHLSNYIVSIFKYNPQTKQMAFVDINKSLDFTKTDKSLVNLEILKSEIEKANYGVWPPVTE</sequence>
<protein>
    <recommendedName>
        <fullName>Glutaredoxin-2</fullName>
    </recommendedName>
</protein>
<accession>Q775W3</accession>
<keyword id="KW-1015">Disulfide bond</keyword>
<keyword id="KW-0249">Electron transport</keyword>
<keyword id="KW-1035">Host cytoplasm</keyword>
<keyword id="KW-0676">Redox-active center</keyword>
<keyword id="KW-1185">Reference proteome</keyword>
<keyword id="KW-0813">Transport</keyword>
<reference key="1">
    <citation type="journal article" date="2002" name="J. Gen. Virol.">
        <title>The sequence of camelpox virus shows it is most closely related to variola virus, the cause of smallpox.</title>
        <authorList>
            <person name="Gubser C."/>
            <person name="Smith G.L."/>
        </authorList>
    </citation>
    <scope>NUCLEOTIDE SEQUENCE [LARGE SCALE GENOMIC DNA]</scope>
</reference>
<feature type="chain" id="PRO_0000141632" description="Glutaredoxin-2">
    <location>
        <begin position="1"/>
        <end position="124"/>
    </location>
</feature>
<feature type="disulfide bond" description="Redox-active" evidence="1">
    <location>
        <begin position="13"/>
        <end position="16"/>
    </location>
</feature>
<organism>
    <name type="scientific">Camelpox virus (strain CMS)</name>
    <dbReference type="NCBI Taxonomy" id="203172"/>
    <lineage>
        <taxon>Viruses</taxon>
        <taxon>Varidnaviria</taxon>
        <taxon>Bamfordvirae</taxon>
        <taxon>Nucleocytoviricota</taxon>
        <taxon>Pokkesviricetes</taxon>
        <taxon>Chitovirales</taxon>
        <taxon>Poxviridae</taxon>
        <taxon>Chordopoxvirinae</taxon>
        <taxon>Orthopoxvirus</taxon>
        <taxon>Camelpox virus</taxon>
    </lineage>
</organism>
<dbReference type="EMBL" id="AY009089">
    <property type="protein sequence ID" value="AAG37548.1"/>
    <property type="molecule type" value="Genomic_DNA"/>
</dbReference>
<dbReference type="SMR" id="Q775W3"/>
<dbReference type="Proteomes" id="UP000107153">
    <property type="component" value="Genome"/>
</dbReference>
<dbReference type="GO" id="GO:0030430">
    <property type="term" value="C:host cell cytoplasm"/>
    <property type="evidence" value="ECO:0007669"/>
    <property type="project" value="UniProtKB-SubCell"/>
</dbReference>
<dbReference type="Gene3D" id="3.40.30.10">
    <property type="entry name" value="Glutaredoxin"/>
    <property type="match status" value="1"/>
</dbReference>
<dbReference type="InterPro" id="IPR008554">
    <property type="entry name" value="Glutaredoxin-like"/>
</dbReference>
<dbReference type="InterPro" id="IPR036249">
    <property type="entry name" value="Thioredoxin-like_sf"/>
</dbReference>
<dbReference type="Pfam" id="PF05768">
    <property type="entry name" value="Glrx-like"/>
    <property type="match status" value="1"/>
</dbReference>
<dbReference type="SUPFAM" id="SSF52833">
    <property type="entry name" value="Thioredoxin-like"/>
    <property type="match status" value="1"/>
</dbReference>
<comment type="function">
    <text evidence="1">Glutaredoxin necessary for virion morphogenesis and virus replication. Functions as a thiol-disulfide transfer protein between membrane-associated OPG128 and substrates OPG095 or OPG053. The complete pathway for formation of disulfide bonds in intracellular virion membrane proteins sequentially involves oxidation of OPG072, OPG128 and OPG088. Exhibit thioltransferase and dehydroascorbate reductase activities in vitro.</text>
</comment>
<comment type="subunit">
    <text evidence="1">Homodimer.</text>
</comment>
<comment type="subcellular location">
    <subcellularLocation>
        <location evidence="1">Host cytoplasm</location>
    </subcellularLocation>
</comment>
<comment type="induction">
    <text evidence="1">Expressed in the intermediate phase of the viral replicative cycle.</text>
</comment>
<comment type="similarity">
    <text evidence="2">Belongs to the glutaredoxin family.</text>
</comment>
<organismHost>
    <name type="scientific">Camelus</name>
    <dbReference type="NCBI Taxonomy" id="9836"/>
</organismHost>
<gene>
    <name type="primary">OPG088</name>
    <name type="ordered locus">CMP78L</name>
</gene>